<evidence type="ECO:0000255" key="1">
    <source>
        <dbReference type="HAMAP-Rule" id="MF_00386"/>
    </source>
</evidence>
<evidence type="ECO:0000256" key="2">
    <source>
        <dbReference type="SAM" id="MobiDB-lite"/>
    </source>
</evidence>
<dbReference type="EMBL" id="FM242711">
    <property type="protein sequence ID" value="CAS05444.1"/>
    <property type="molecule type" value="Genomic_DNA"/>
</dbReference>
<dbReference type="KEGG" id="lmc:Lm4b_01683"/>
<dbReference type="HOGENOM" id="CLU_144811_6_0_9"/>
<dbReference type="GO" id="GO:0005886">
    <property type="term" value="C:plasma membrane"/>
    <property type="evidence" value="ECO:0007669"/>
    <property type="project" value="UniProtKB-SubCell"/>
</dbReference>
<dbReference type="HAMAP" id="MF_00386">
    <property type="entry name" value="UPF0161_YidD"/>
    <property type="match status" value="1"/>
</dbReference>
<dbReference type="InterPro" id="IPR002696">
    <property type="entry name" value="Membr_insert_effic_factor_YidD"/>
</dbReference>
<dbReference type="NCBIfam" id="TIGR00278">
    <property type="entry name" value="membrane protein insertion efficiency factor YidD"/>
    <property type="match status" value="1"/>
</dbReference>
<dbReference type="PANTHER" id="PTHR33383">
    <property type="entry name" value="MEMBRANE PROTEIN INSERTION EFFICIENCY FACTOR-RELATED"/>
    <property type="match status" value="1"/>
</dbReference>
<dbReference type="PANTHER" id="PTHR33383:SF1">
    <property type="entry name" value="MEMBRANE PROTEIN INSERTION EFFICIENCY FACTOR-RELATED"/>
    <property type="match status" value="1"/>
</dbReference>
<dbReference type="Pfam" id="PF01809">
    <property type="entry name" value="YidD"/>
    <property type="match status" value="1"/>
</dbReference>
<dbReference type="SMART" id="SM01234">
    <property type="entry name" value="Haemolytic"/>
    <property type="match status" value="1"/>
</dbReference>
<comment type="function">
    <text evidence="1">Could be involved in insertion of integral membrane proteins into the membrane.</text>
</comment>
<comment type="subcellular location">
    <subcellularLocation>
        <location evidence="1">Cell membrane</location>
        <topology evidence="1">Peripheral membrane protein</topology>
        <orientation evidence="1">Cytoplasmic side</orientation>
    </subcellularLocation>
</comment>
<comment type="similarity">
    <text evidence="1">Belongs to the UPF0161 family.</text>
</comment>
<accession>C1KVW9</accession>
<name>YIDD_LISMC</name>
<protein>
    <recommendedName>
        <fullName evidence="1">Putative membrane protein insertion efficiency factor</fullName>
    </recommendedName>
</protein>
<proteinExistence type="inferred from homology"/>
<feature type="chain" id="PRO_1000205787" description="Putative membrane protein insertion efficiency factor">
    <location>
        <begin position="1"/>
        <end position="88"/>
    </location>
</feature>
<feature type="region of interest" description="Disordered" evidence="2">
    <location>
        <begin position="66"/>
        <end position="88"/>
    </location>
</feature>
<feature type="compositionally biased region" description="Basic and acidic residues" evidence="2">
    <location>
        <begin position="69"/>
        <end position="82"/>
    </location>
</feature>
<keyword id="KW-1003">Cell membrane</keyword>
<keyword id="KW-0472">Membrane</keyword>
<organism>
    <name type="scientific">Listeria monocytogenes serotype 4b (strain CLIP80459)</name>
    <dbReference type="NCBI Taxonomy" id="568819"/>
    <lineage>
        <taxon>Bacteria</taxon>
        <taxon>Bacillati</taxon>
        <taxon>Bacillota</taxon>
        <taxon>Bacilli</taxon>
        <taxon>Bacillales</taxon>
        <taxon>Listeriaceae</taxon>
        <taxon>Listeria</taxon>
    </lineage>
</organism>
<sequence length="88" mass="9994">MKKILIGGIRLYQKYISRFTPATCRFYPTCSAYGIEAIQTHGALKGSYLAIRRISKCHPFHKGGLDFVPPKKEKNADSEHSCKAHHHH</sequence>
<reference key="1">
    <citation type="journal article" date="2012" name="BMC Genomics">
        <title>Comparative genomics and transcriptomics of lineages I, II, and III strains of Listeria monocytogenes.</title>
        <authorList>
            <person name="Hain T."/>
            <person name="Ghai R."/>
            <person name="Billion A."/>
            <person name="Kuenne C.T."/>
            <person name="Steinweg C."/>
            <person name="Izar B."/>
            <person name="Mohamed W."/>
            <person name="Mraheil M."/>
            <person name="Domann E."/>
            <person name="Schaffrath S."/>
            <person name="Karst U."/>
            <person name="Goesmann A."/>
            <person name="Oehm S."/>
            <person name="Puhler A."/>
            <person name="Merkl R."/>
            <person name="Vorwerk S."/>
            <person name="Glaser P."/>
            <person name="Garrido P."/>
            <person name="Rusniok C."/>
            <person name="Buchrieser C."/>
            <person name="Goebel W."/>
            <person name="Chakraborty T."/>
        </authorList>
    </citation>
    <scope>NUCLEOTIDE SEQUENCE [LARGE SCALE GENOMIC DNA]</scope>
    <source>
        <strain>CLIP80459</strain>
    </source>
</reference>
<gene>
    <name type="ordered locus">Lm4b_01683</name>
</gene>